<evidence type="ECO:0000255" key="1">
    <source>
        <dbReference type="HAMAP-Rule" id="MF_00044"/>
    </source>
</evidence>
<comment type="function">
    <text evidence="1">Catalyzes the attachment of L-aspartate to tRNA(Asp) in a two-step reaction: L-aspartate is first activated by ATP to form Asp-AMP and then transferred to the acceptor end of tRNA(Asp).</text>
</comment>
<comment type="catalytic activity">
    <reaction evidence="1">
        <text>tRNA(Asp) + L-aspartate + ATP = L-aspartyl-tRNA(Asp) + AMP + diphosphate</text>
        <dbReference type="Rhea" id="RHEA:19649"/>
        <dbReference type="Rhea" id="RHEA-COMP:9660"/>
        <dbReference type="Rhea" id="RHEA-COMP:9678"/>
        <dbReference type="ChEBI" id="CHEBI:29991"/>
        <dbReference type="ChEBI" id="CHEBI:30616"/>
        <dbReference type="ChEBI" id="CHEBI:33019"/>
        <dbReference type="ChEBI" id="CHEBI:78442"/>
        <dbReference type="ChEBI" id="CHEBI:78516"/>
        <dbReference type="ChEBI" id="CHEBI:456215"/>
        <dbReference type="EC" id="6.1.1.12"/>
    </reaction>
</comment>
<comment type="subunit">
    <text evidence="1">Homodimer.</text>
</comment>
<comment type="subcellular location">
    <subcellularLocation>
        <location evidence="1">Cytoplasm</location>
    </subcellularLocation>
</comment>
<comment type="similarity">
    <text evidence="1">Belongs to the class-II aminoacyl-tRNA synthetase family. Type 1 subfamily.</text>
</comment>
<dbReference type="EC" id="6.1.1.12" evidence="1"/>
<dbReference type="EMBL" id="CP000469">
    <property type="protein sequence ID" value="ABK48184.1"/>
    <property type="molecule type" value="Genomic_DNA"/>
</dbReference>
<dbReference type="RefSeq" id="WP_011716950.1">
    <property type="nucleotide sequence ID" value="NC_008577.1"/>
</dbReference>
<dbReference type="SMR" id="A0KWL5"/>
<dbReference type="STRING" id="94122.Shewana3_1953"/>
<dbReference type="KEGG" id="shn:Shewana3_1953"/>
<dbReference type="eggNOG" id="COG0173">
    <property type="taxonomic scope" value="Bacteria"/>
</dbReference>
<dbReference type="HOGENOM" id="CLU_014330_3_2_6"/>
<dbReference type="OrthoDB" id="9802326at2"/>
<dbReference type="Proteomes" id="UP000002589">
    <property type="component" value="Chromosome"/>
</dbReference>
<dbReference type="GO" id="GO:0005737">
    <property type="term" value="C:cytoplasm"/>
    <property type="evidence" value="ECO:0007669"/>
    <property type="project" value="UniProtKB-SubCell"/>
</dbReference>
<dbReference type="GO" id="GO:0004815">
    <property type="term" value="F:aspartate-tRNA ligase activity"/>
    <property type="evidence" value="ECO:0007669"/>
    <property type="project" value="UniProtKB-UniRule"/>
</dbReference>
<dbReference type="GO" id="GO:0005524">
    <property type="term" value="F:ATP binding"/>
    <property type="evidence" value="ECO:0007669"/>
    <property type="project" value="UniProtKB-UniRule"/>
</dbReference>
<dbReference type="GO" id="GO:0003676">
    <property type="term" value="F:nucleic acid binding"/>
    <property type="evidence" value="ECO:0007669"/>
    <property type="project" value="InterPro"/>
</dbReference>
<dbReference type="GO" id="GO:0006422">
    <property type="term" value="P:aspartyl-tRNA aminoacylation"/>
    <property type="evidence" value="ECO:0007669"/>
    <property type="project" value="UniProtKB-UniRule"/>
</dbReference>
<dbReference type="CDD" id="cd00777">
    <property type="entry name" value="AspRS_core"/>
    <property type="match status" value="1"/>
</dbReference>
<dbReference type="CDD" id="cd04317">
    <property type="entry name" value="EcAspRS_like_N"/>
    <property type="match status" value="1"/>
</dbReference>
<dbReference type="FunFam" id="2.40.50.140:FF:000080">
    <property type="entry name" value="Aspartate--tRNA ligase"/>
    <property type="match status" value="1"/>
</dbReference>
<dbReference type="Gene3D" id="3.30.930.10">
    <property type="entry name" value="Bira Bifunctional Protein, Domain 2"/>
    <property type="match status" value="1"/>
</dbReference>
<dbReference type="Gene3D" id="3.30.1360.30">
    <property type="entry name" value="GAD-like domain"/>
    <property type="match status" value="1"/>
</dbReference>
<dbReference type="Gene3D" id="2.40.50.140">
    <property type="entry name" value="Nucleic acid-binding proteins"/>
    <property type="match status" value="1"/>
</dbReference>
<dbReference type="HAMAP" id="MF_00044">
    <property type="entry name" value="Asp_tRNA_synth_type1"/>
    <property type="match status" value="1"/>
</dbReference>
<dbReference type="InterPro" id="IPR004364">
    <property type="entry name" value="Aa-tRNA-synt_II"/>
</dbReference>
<dbReference type="InterPro" id="IPR006195">
    <property type="entry name" value="aa-tRNA-synth_II"/>
</dbReference>
<dbReference type="InterPro" id="IPR045864">
    <property type="entry name" value="aa-tRNA-synth_II/BPL/LPL"/>
</dbReference>
<dbReference type="InterPro" id="IPR004524">
    <property type="entry name" value="Asp-tRNA-ligase_1"/>
</dbReference>
<dbReference type="InterPro" id="IPR047089">
    <property type="entry name" value="Asp-tRNA-ligase_1_N"/>
</dbReference>
<dbReference type="InterPro" id="IPR002312">
    <property type="entry name" value="Asp/Asn-tRNA-synth_IIb"/>
</dbReference>
<dbReference type="InterPro" id="IPR047090">
    <property type="entry name" value="AspRS_core"/>
</dbReference>
<dbReference type="InterPro" id="IPR004115">
    <property type="entry name" value="GAD-like_sf"/>
</dbReference>
<dbReference type="InterPro" id="IPR029351">
    <property type="entry name" value="GAD_dom"/>
</dbReference>
<dbReference type="InterPro" id="IPR012340">
    <property type="entry name" value="NA-bd_OB-fold"/>
</dbReference>
<dbReference type="InterPro" id="IPR004365">
    <property type="entry name" value="NA-bd_OB_tRNA"/>
</dbReference>
<dbReference type="NCBIfam" id="TIGR00459">
    <property type="entry name" value="aspS_bact"/>
    <property type="match status" value="1"/>
</dbReference>
<dbReference type="NCBIfam" id="NF001750">
    <property type="entry name" value="PRK00476.1"/>
    <property type="match status" value="1"/>
</dbReference>
<dbReference type="PANTHER" id="PTHR22594:SF5">
    <property type="entry name" value="ASPARTATE--TRNA LIGASE, MITOCHONDRIAL"/>
    <property type="match status" value="1"/>
</dbReference>
<dbReference type="PANTHER" id="PTHR22594">
    <property type="entry name" value="ASPARTYL/LYSYL-TRNA SYNTHETASE"/>
    <property type="match status" value="1"/>
</dbReference>
<dbReference type="Pfam" id="PF02938">
    <property type="entry name" value="GAD"/>
    <property type="match status" value="1"/>
</dbReference>
<dbReference type="Pfam" id="PF00152">
    <property type="entry name" value="tRNA-synt_2"/>
    <property type="match status" value="1"/>
</dbReference>
<dbReference type="Pfam" id="PF01336">
    <property type="entry name" value="tRNA_anti-codon"/>
    <property type="match status" value="1"/>
</dbReference>
<dbReference type="PRINTS" id="PR01042">
    <property type="entry name" value="TRNASYNTHASP"/>
</dbReference>
<dbReference type="SUPFAM" id="SSF55681">
    <property type="entry name" value="Class II aaRS and biotin synthetases"/>
    <property type="match status" value="1"/>
</dbReference>
<dbReference type="SUPFAM" id="SSF55261">
    <property type="entry name" value="GAD domain-like"/>
    <property type="match status" value="1"/>
</dbReference>
<dbReference type="SUPFAM" id="SSF50249">
    <property type="entry name" value="Nucleic acid-binding proteins"/>
    <property type="match status" value="1"/>
</dbReference>
<dbReference type="PROSITE" id="PS50862">
    <property type="entry name" value="AA_TRNA_LIGASE_II"/>
    <property type="match status" value="1"/>
</dbReference>
<gene>
    <name evidence="1" type="primary">aspS</name>
    <name type="ordered locus">Shewana3_1953</name>
</gene>
<feature type="chain" id="PRO_1000006759" description="Aspartate--tRNA ligase">
    <location>
        <begin position="1"/>
        <end position="591"/>
    </location>
</feature>
<feature type="region of interest" description="Aspartate" evidence="1">
    <location>
        <begin position="197"/>
        <end position="200"/>
    </location>
</feature>
<feature type="binding site" evidence="1">
    <location>
        <position position="173"/>
    </location>
    <ligand>
        <name>L-aspartate</name>
        <dbReference type="ChEBI" id="CHEBI:29991"/>
    </ligand>
</feature>
<feature type="binding site" evidence="1">
    <location>
        <begin position="219"/>
        <end position="221"/>
    </location>
    <ligand>
        <name>ATP</name>
        <dbReference type="ChEBI" id="CHEBI:30616"/>
    </ligand>
</feature>
<feature type="binding site" evidence="1">
    <location>
        <position position="219"/>
    </location>
    <ligand>
        <name>L-aspartate</name>
        <dbReference type="ChEBI" id="CHEBI:29991"/>
    </ligand>
</feature>
<feature type="binding site" evidence="1">
    <location>
        <position position="228"/>
    </location>
    <ligand>
        <name>ATP</name>
        <dbReference type="ChEBI" id="CHEBI:30616"/>
    </ligand>
</feature>
<feature type="binding site" evidence="1">
    <location>
        <position position="448"/>
    </location>
    <ligand>
        <name>L-aspartate</name>
        <dbReference type="ChEBI" id="CHEBI:29991"/>
    </ligand>
</feature>
<feature type="binding site" evidence="1">
    <location>
        <position position="482"/>
    </location>
    <ligand>
        <name>ATP</name>
        <dbReference type="ChEBI" id="CHEBI:30616"/>
    </ligand>
</feature>
<feature type="binding site" evidence="1">
    <location>
        <position position="489"/>
    </location>
    <ligand>
        <name>L-aspartate</name>
        <dbReference type="ChEBI" id="CHEBI:29991"/>
    </ligand>
</feature>
<feature type="binding site" evidence="1">
    <location>
        <begin position="534"/>
        <end position="537"/>
    </location>
    <ligand>
        <name>ATP</name>
        <dbReference type="ChEBI" id="CHEBI:30616"/>
    </ligand>
</feature>
<organism>
    <name type="scientific">Shewanella sp. (strain ANA-3)</name>
    <dbReference type="NCBI Taxonomy" id="94122"/>
    <lineage>
        <taxon>Bacteria</taxon>
        <taxon>Pseudomonadati</taxon>
        <taxon>Pseudomonadota</taxon>
        <taxon>Gammaproteobacteria</taxon>
        <taxon>Alteromonadales</taxon>
        <taxon>Shewanellaceae</taxon>
        <taxon>Shewanella</taxon>
    </lineage>
</organism>
<sequence>MRSHYCGDVNKSHVGQEVTLVGWVNRSRDLGGVVFLDLRDREGLVQVVYDPDLPEVFNVASTLRAEFCVQVKGVVRARPDSQVNAQMKTGEIEVLGKELTIINSSEPLPLSLDNYQNNSEEQRLKYRYLDLRRPEMAQRLMFRAKVTSAVRRFLDSNGFLDIETPILTKATPEGARDYLVPSRTYKGQFFALPQSPQLFKQLLMMSGFDRYYQIVKCFRDEDLRADRQPEFTQIDIETSFMTSEQVMAKTEEMMRGLFLEMLNVDLGEFPRMTYNEAMRRFGSDKPDLRNPLELVDVADLLKEVEFAVFSGPANDEEGRVAALRIPGGASLSRKQIDDYTKFVGIYGAKGLAWMKLNDLTQGLEGIQSPVLKFLNEGIVNEIISRTGAQTGDIILFGADNATVVAESMGALRLKAGEDFNLLEGQWRPLWVVDFPMFEKINGSFHAVHHPFTAPRGVTPQELEANPANRVSDAYDMVLNGCELGGGSVRIHNQEMQSAVFRILGITDEEAKEKFGFLLEALRYGTPPHAGLAFGLDRIIMLMTGASSIRDVMAFPKTTTAACPLTNAPGFANPQQLAELGISVVKAAKTED</sequence>
<reference key="1">
    <citation type="submission" date="2006-09" db="EMBL/GenBank/DDBJ databases">
        <title>Complete sequence of chromosome 1 of Shewanella sp. ANA-3.</title>
        <authorList>
            <person name="Copeland A."/>
            <person name="Lucas S."/>
            <person name="Lapidus A."/>
            <person name="Barry K."/>
            <person name="Detter J.C."/>
            <person name="Glavina del Rio T."/>
            <person name="Hammon N."/>
            <person name="Israni S."/>
            <person name="Dalin E."/>
            <person name="Tice H."/>
            <person name="Pitluck S."/>
            <person name="Chertkov O."/>
            <person name="Brettin T."/>
            <person name="Bruce D."/>
            <person name="Han C."/>
            <person name="Tapia R."/>
            <person name="Gilna P."/>
            <person name="Schmutz J."/>
            <person name="Larimer F."/>
            <person name="Land M."/>
            <person name="Hauser L."/>
            <person name="Kyrpides N."/>
            <person name="Kim E."/>
            <person name="Newman D."/>
            <person name="Salticov C."/>
            <person name="Konstantinidis K."/>
            <person name="Klappenback J."/>
            <person name="Tiedje J."/>
            <person name="Richardson P."/>
        </authorList>
    </citation>
    <scope>NUCLEOTIDE SEQUENCE [LARGE SCALE GENOMIC DNA]</scope>
    <source>
        <strain>ANA-3</strain>
    </source>
</reference>
<name>SYD_SHESA</name>
<keyword id="KW-0030">Aminoacyl-tRNA synthetase</keyword>
<keyword id="KW-0067">ATP-binding</keyword>
<keyword id="KW-0963">Cytoplasm</keyword>
<keyword id="KW-0436">Ligase</keyword>
<keyword id="KW-0547">Nucleotide-binding</keyword>
<keyword id="KW-0648">Protein biosynthesis</keyword>
<protein>
    <recommendedName>
        <fullName evidence="1">Aspartate--tRNA ligase</fullName>
        <ecNumber evidence="1">6.1.1.12</ecNumber>
    </recommendedName>
    <alternativeName>
        <fullName evidence="1">Aspartyl-tRNA synthetase</fullName>
        <shortName evidence="1">AspRS</shortName>
    </alternativeName>
</protein>
<accession>A0KWL5</accession>
<proteinExistence type="inferred from homology"/>